<comment type="function">
    <text evidence="1">RNA chaperone that binds small regulatory RNA (sRNAs) and mRNAs to facilitate mRNA translational regulation in response to envelope stress, environmental stress and changes in metabolite concentrations. Also binds with high specificity to tRNAs.</text>
</comment>
<comment type="subunit">
    <text evidence="1">Homohexamer.</text>
</comment>
<comment type="similarity">
    <text evidence="1">Belongs to the Hfq family.</text>
</comment>
<sequence length="85" mass="9346">MAKGQSLQDPFLNALRRERIPVSIYLVNGIKLQGQVESFDQFVILLKNTVSQMVYKHAISTVVPARPVAHHTAPAAGDSDSQSEE</sequence>
<keyword id="KW-1185">Reference proteome</keyword>
<keyword id="KW-0694">RNA-binding</keyword>
<keyword id="KW-0346">Stress response</keyword>
<reference key="1">
    <citation type="submission" date="2009-05" db="EMBL/GenBank/DDBJ databases">
        <title>Complete sequence of Tolumonas auensis DSM 9187.</title>
        <authorList>
            <consortium name="US DOE Joint Genome Institute"/>
            <person name="Lucas S."/>
            <person name="Copeland A."/>
            <person name="Lapidus A."/>
            <person name="Glavina del Rio T."/>
            <person name="Tice H."/>
            <person name="Bruce D."/>
            <person name="Goodwin L."/>
            <person name="Pitluck S."/>
            <person name="Chertkov O."/>
            <person name="Brettin T."/>
            <person name="Detter J.C."/>
            <person name="Han C."/>
            <person name="Larimer F."/>
            <person name="Land M."/>
            <person name="Hauser L."/>
            <person name="Kyrpides N."/>
            <person name="Mikhailova N."/>
            <person name="Spring S."/>
            <person name="Beller H."/>
        </authorList>
    </citation>
    <scope>NUCLEOTIDE SEQUENCE [LARGE SCALE GENOMIC DNA]</scope>
    <source>
        <strain>DSM 9187 / NBRC 110442 / TA 4</strain>
    </source>
</reference>
<evidence type="ECO:0000255" key="1">
    <source>
        <dbReference type="HAMAP-Rule" id="MF_00436"/>
    </source>
</evidence>
<evidence type="ECO:0000255" key="2">
    <source>
        <dbReference type="PROSITE-ProRule" id="PRU01346"/>
    </source>
</evidence>
<accession>C4L9M9</accession>
<feature type="chain" id="PRO_1000206106" description="RNA-binding protein Hfq">
    <location>
        <begin position="1"/>
        <end position="85"/>
    </location>
</feature>
<feature type="domain" description="Sm" evidence="2">
    <location>
        <begin position="9"/>
        <end position="68"/>
    </location>
</feature>
<proteinExistence type="inferred from homology"/>
<protein>
    <recommendedName>
        <fullName evidence="1">RNA-binding protein Hfq</fullName>
    </recommendedName>
</protein>
<name>HFQ_TOLAT</name>
<organism>
    <name type="scientific">Tolumonas auensis (strain DSM 9187 / NBRC 110442 / TA 4)</name>
    <dbReference type="NCBI Taxonomy" id="595494"/>
    <lineage>
        <taxon>Bacteria</taxon>
        <taxon>Pseudomonadati</taxon>
        <taxon>Pseudomonadota</taxon>
        <taxon>Gammaproteobacteria</taxon>
        <taxon>Aeromonadales</taxon>
        <taxon>Aeromonadaceae</taxon>
        <taxon>Tolumonas</taxon>
    </lineage>
</organism>
<dbReference type="EMBL" id="CP001616">
    <property type="protein sequence ID" value="ACQ93982.1"/>
    <property type="molecule type" value="Genomic_DNA"/>
</dbReference>
<dbReference type="RefSeq" id="WP_015879450.1">
    <property type="nucleotide sequence ID" value="NC_012691.1"/>
</dbReference>
<dbReference type="SMR" id="C4L9M9"/>
<dbReference type="STRING" id="595494.Tola_2385"/>
<dbReference type="KEGG" id="tau:Tola_2385"/>
<dbReference type="eggNOG" id="COG1923">
    <property type="taxonomic scope" value="Bacteria"/>
</dbReference>
<dbReference type="HOGENOM" id="CLU_113688_2_2_6"/>
<dbReference type="OrthoDB" id="9799751at2"/>
<dbReference type="Proteomes" id="UP000009073">
    <property type="component" value="Chromosome"/>
</dbReference>
<dbReference type="GO" id="GO:0005829">
    <property type="term" value="C:cytosol"/>
    <property type="evidence" value="ECO:0007669"/>
    <property type="project" value="TreeGrafter"/>
</dbReference>
<dbReference type="GO" id="GO:0003723">
    <property type="term" value="F:RNA binding"/>
    <property type="evidence" value="ECO:0007669"/>
    <property type="project" value="UniProtKB-UniRule"/>
</dbReference>
<dbReference type="GO" id="GO:0006355">
    <property type="term" value="P:regulation of DNA-templated transcription"/>
    <property type="evidence" value="ECO:0007669"/>
    <property type="project" value="InterPro"/>
</dbReference>
<dbReference type="GO" id="GO:0043487">
    <property type="term" value="P:regulation of RNA stability"/>
    <property type="evidence" value="ECO:0007669"/>
    <property type="project" value="TreeGrafter"/>
</dbReference>
<dbReference type="GO" id="GO:0045974">
    <property type="term" value="P:regulation of translation, ncRNA-mediated"/>
    <property type="evidence" value="ECO:0007669"/>
    <property type="project" value="TreeGrafter"/>
</dbReference>
<dbReference type="CDD" id="cd01716">
    <property type="entry name" value="Hfq"/>
    <property type="match status" value="1"/>
</dbReference>
<dbReference type="FunFam" id="2.30.30.100:FF:000001">
    <property type="entry name" value="RNA-binding protein Hfq"/>
    <property type="match status" value="1"/>
</dbReference>
<dbReference type="Gene3D" id="2.30.30.100">
    <property type="match status" value="1"/>
</dbReference>
<dbReference type="HAMAP" id="MF_00436">
    <property type="entry name" value="Hfq"/>
    <property type="match status" value="1"/>
</dbReference>
<dbReference type="InterPro" id="IPR005001">
    <property type="entry name" value="Hfq"/>
</dbReference>
<dbReference type="InterPro" id="IPR010920">
    <property type="entry name" value="LSM_dom_sf"/>
</dbReference>
<dbReference type="InterPro" id="IPR047575">
    <property type="entry name" value="Sm"/>
</dbReference>
<dbReference type="NCBIfam" id="TIGR02383">
    <property type="entry name" value="Hfq"/>
    <property type="match status" value="1"/>
</dbReference>
<dbReference type="NCBIfam" id="NF001602">
    <property type="entry name" value="PRK00395.1"/>
    <property type="match status" value="1"/>
</dbReference>
<dbReference type="PANTHER" id="PTHR34772">
    <property type="entry name" value="RNA-BINDING PROTEIN HFQ"/>
    <property type="match status" value="1"/>
</dbReference>
<dbReference type="PANTHER" id="PTHR34772:SF1">
    <property type="entry name" value="RNA-BINDING PROTEIN HFQ"/>
    <property type="match status" value="1"/>
</dbReference>
<dbReference type="Pfam" id="PF17209">
    <property type="entry name" value="Hfq"/>
    <property type="match status" value="1"/>
</dbReference>
<dbReference type="SUPFAM" id="SSF50182">
    <property type="entry name" value="Sm-like ribonucleoproteins"/>
    <property type="match status" value="1"/>
</dbReference>
<dbReference type="PROSITE" id="PS52002">
    <property type="entry name" value="SM"/>
    <property type="match status" value="1"/>
</dbReference>
<gene>
    <name evidence="1" type="primary">hfq</name>
    <name type="ordered locus">Tola_2385</name>
</gene>